<evidence type="ECO:0000255" key="1">
    <source>
        <dbReference type="HAMAP-Rule" id="MF_00301"/>
    </source>
</evidence>
<organism>
    <name type="scientific">Caulobacter sp. (strain K31)</name>
    <dbReference type="NCBI Taxonomy" id="366602"/>
    <lineage>
        <taxon>Bacteria</taxon>
        <taxon>Pseudomonadati</taxon>
        <taxon>Pseudomonadota</taxon>
        <taxon>Alphaproteobacteria</taxon>
        <taxon>Caulobacterales</taxon>
        <taxon>Caulobacteraceae</taxon>
        <taxon>Caulobacter</taxon>
    </lineage>
</organism>
<feature type="chain" id="PRO_1000079018" description="Homoserine kinase">
    <location>
        <begin position="1"/>
        <end position="320"/>
    </location>
</feature>
<reference key="1">
    <citation type="submission" date="2008-01" db="EMBL/GenBank/DDBJ databases">
        <title>Complete sequence of chromosome of Caulobacter sp. K31.</title>
        <authorList>
            <consortium name="US DOE Joint Genome Institute"/>
            <person name="Copeland A."/>
            <person name="Lucas S."/>
            <person name="Lapidus A."/>
            <person name="Barry K."/>
            <person name="Glavina del Rio T."/>
            <person name="Dalin E."/>
            <person name="Tice H."/>
            <person name="Pitluck S."/>
            <person name="Bruce D."/>
            <person name="Goodwin L."/>
            <person name="Thompson L.S."/>
            <person name="Brettin T."/>
            <person name="Detter J.C."/>
            <person name="Han C."/>
            <person name="Schmutz J."/>
            <person name="Larimer F."/>
            <person name="Land M."/>
            <person name="Hauser L."/>
            <person name="Kyrpides N."/>
            <person name="Kim E."/>
            <person name="Stephens C."/>
            <person name="Richardson P."/>
        </authorList>
    </citation>
    <scope>NUCLEOTIDE SEQUENCE [LARGE SCALE GENOMIC DNA]</scope>
    <source>
        <strain>K31</strain>
    </source>
</reference>
<comment type="catalytic activity">
    <reaction evidence="1">
        <text>L-homoserine + ATP = O-phospho-L-homoserine + ADP + H(+)</text>
        <dbReference type="Rhea" id="RHEA:13985"/>
        <dbReference type="ChEBI" id="CHEBI:15378"/>
        <dbReference type="ChEBI" id="CHEBI:30616"/>
        <dbReference type="ChEBI" id="CHEBI:57476"/>
        <dbReference type="ChEBI" id="CHEBI:57590"/>
        <dbReference type="ChEBI" id="CHEBI:456216"/>
        <dbReference type="EC" id="2.7.1.39"/>
    </reaction>
</comment>
<comment type="pathway">
    <text evidence="1">Amino-acid biosynthesis; L-threonine biosynthesis; L-threonine from L-aspartate: step 4/5.</text>
</comment>
<comment type="similarity">
    <text evidence="1">Belongs to the pseudomonas-type ThrB family.</text>
</comment>
<dbReference type="EC" id="2.7.1.39" evidence="1"/>
<dbReference type="EMBL" id="CP000927">
    <property type="protein sequence ID" value="ABZ73514.1"/>
    <property type="molecule type" value="Genomic_DNA"/>
</dbReference>
<dbReference type="SMR" id="B0T024"/>
<dbReference type="STRING" id="366602.Caul_4394"/>
<dbReference type="KEGG" id="cak:Caul_4394"/>
<dbReference type="eggNOG" id="COG2334">
    <property type="taxonomic scope" value="Bacteria"/>
</dbReference>
<dbReference type="HOGENOM" id="CLU_053300_1_0_5"/>
<dbReference type="OrthoDB" id="9777460at2"/>
<dbReference type="UniPathway" id="UPA00050">
    <property type="reaction ID" value="UER00064"/>
</dbReference>
<dbReference type="GO" id="GO:0005524">
    <property type="term" value="F:ATP binding"/>
    <property type="evidence" value="ECO:0007669"/>
    <property type="project" value="UniProtKB-KW"/>
</dbReference>
<dbReference type="GO" id="GO:0004413">
    <property type="term" value="F:homoserine kinase activity"/>
    <property type="evidence" value="ECO:0007669"/>
    <property type="project" value="UniProtKB-UniRule"/>
</dbReference>
<dbReference type="GO" id="GO:0009088">
    <property type="term" value="P:threonine biosynthetic process"/>
    <property type="evidence" value="ECO:0007669"/>
    <property type="project" value="UniProtKB-UniRule"/>
</dbReference>
<dbReference type="CDD" id="cd05153">
    <property type="entry name" value="HomoserineK_II"/>
    <property type="match status" value="1"/>
</dbReference>
<dbReference type="Gene3D" id="3.90.1200.10">
    <property type="match status" value="1"/>
</dbReference>
<dbReference type="Gene3D" id="3.30.200.20">
    <property type="entry name" value="Phosphorylase Kinase, domain 1"/>
    <property type="match status" value="1"/>
</dbReference>
<dbReference type="HAMAP" id="MF_00301">
    <property type="entry name" value="Homoser_kinase_2"/>
    <property type="match status" value="1"/>
</dbReference>
<dbReference type="InterPro" id="IPR002575">
    <property type="entry name" value="Aminoglycoside_PTrfase"/>
</dbReference>
<dbReference type="InterPro" id="IPR005280">
    <property type="entry name" value="Homoserine_kinase_II"/>
</dbReference>
<dbReference type="InterPro" id="IPR011009">
    <property type="entry name" value="Kinase-like_dom_sf"/>
</dbReference>
<dbReference type="InterPro" id="IPR050249">
    <property type="entry name" value="Pseudomonas-type_ThrB"/>
</dbReference>
<dbReference type="NCBIfam" id="NF003558">
    <property type="entry name" value="PRK05231.1"/>
    <property type="match status" value="1"/>
</dbReference>
<dbReference type="NCBIfam" id="TIGR00938">
    <property type="entry name" value="thrB_alt"/>
    <property type="match status" value="1"/>
</dbReference>
<dbReference type="PANTHER" id="PTHR21064:SF6">
    <property type="entry name" value="AMINOGLYCOSIDE PHOSPHOTRANSFERASE DOMAIN-CONTAINING PROTEIN"/>
    <property type="match status" value="1"/>
</dbReference>
<dbReference type="PANTHER" id="PTHR21064">
    <property type="entry name" value="AMINOGLYCOSIDE PHOSPHOTRANSFERASE DOMAIN-CONTAINING PROTEIN-RELATED"/>
    <property type="match status" value="1"/>
</dbReference>
<dbReference type="Pfam" id="PF01636">
    <property type="entry name" value="APH"/>
    <property type="match status" value="1"/>
</dbReference>
<dbReference type="SUPFAM" id="SSF56112">
    <property type="entry name" value="Protein kinase-like (PK-like)"/>
    <property type="match status" value="1"/>
</dbReference>
<protein>
    <recommendedName>
        <fullName evidence="1">Homoserine kinase</fullName>
        <shortName evidence="1">HK</shortName>
        <shortName evidence="1">HSK</shortName>
        <ecNumber evidence="1">2.7.1.39</ecNumber>
    </recommendedName>
</protein>
<name>KHSE_CAUSK</name>
<keyword id="KW-0028">Amino-acid biosynthesis</keyword>
<keyword id="KW-0067">ATP-binding</keyword>
<keyword id="KW-0418">Kinase</keyword>
<keyword id="KW-0547">Nucleotide-binding</keyword>
<keyword id="KW-0791">Threonine biosynthesis</keyword>
<keyword id="KW-0808">Transferase</keyword>
<proteinExistence type="inferred from homology"/>
<accession>B0T024</accession>
<gene>
    <name evidence="1" type="primary">thrB</name>
    <name type="ordered locus">Caul_4394</name>
</gene>
<sequence>MAVYTDITDDELAAFLGDYDLGQAVAFKGIAEGVENSNFLLETTTGRFILTVYERRAKPEDLPYFLDLLTWLADHGYPSAKPIADRSGATLKTIRGKPAALVEFLPGLSARRPTVAHCREAGEGLAWLHLAGEGYPARRANDLGQPHWASLFSKHRKDAEGLKPGLAATIDKDLAELALAWPRGLPSGVIHADYFPDNVFFKPDGKFAAAIDFYFACDDAYAYDIAVTLNAWCFESDGSFNITAARALIAGYERRRPLSPAERDAIPILARGAAMRFFLTRLADWGSTPAGALVRPKDPLEYERKLAVHREGLSLFGAGA</sequence>